<organism>
    <name type="scientific">Triticum aestivum</name>
    <name type="common">Wheat</name>
    <dbReference type="NCBI Taxonomy" id="4565"/>
    <lineage>
        <taxon>Eukaryota</taxon>
        <taxon>Viridiplantae</taxon>
        <taxon>Streptophyta</taxon>
        <taxon>Embryophyta</taxon>
        <taxon>Tracheophyta</taxon>
        <taxon>Spermatophyta</taxon>
        <taxon>Magnoliopsida</taxon>
        <taxon>Liliopsida</taxon>
        <taxon>Poales</taxon>
        <taxon>Poaceae</taxon>
        <taxon>BOP clade</taxon>
        <taxon>Pooideae</taxon>
        <taxon>Triticodae</taxon>
        <taxon>Triticeae</taxon>
        <taxon>Triticinae</taxon>
        <taxon>Triticum</taxon>
    </lineage>
</organism>
<evidence type="ECO:0000250" key="1"/>
<evidence type="ECO:0000255" key="2">
    <source>
        <dbReference type="HAMAP-Rule" id="MF_03125"/>
    </source>
</evidence>
<evidence type="ECO:0000256" key="3">
    <source>
        <dbReference type="SAM" id="MobiDB-lite"/>
    </source>
</evidence>
<evidence type="ECO:0000269" key="4">
    <source>
    </source>
</evidence>
<evidence type="ECO:0007829" key="5">
    <source>
        <dbReference type="PDB" id="1DJ3"/>
    </source>
</evidence>
<sequence length="476" mass="50918">AAAAAGRGRSFSPAAPAPSSVRLPGRQAPAPAAASALAVEADPAADRVSSLSQVSGVLGSQWGDEGKGKLVDVLAPRFDIVARCQGGANAGHTIYNSEGKKFALHLVPSGILHEGTLCVVGNGAVIHVPGFFGEIDGLQSNGVSCDGRILVSDRAHLLFDLHQTVDGLREAELANSFIGTTKRGIGPCYSSKVTRNGLRVCDLRHMDTFGDKLDVLFEDAAARFEGFKYSKGMLKEEVERYKRFAERLEPFIADTVHVLNESIRQKKKILVEGGQATMLDIDFGTYPFVTSSSPSAGGICTGLGIAPRVIGDLIGVVKAYTTRVGSGPFPTELLGEEGDVLRKAGMEFGTTTGRPRRCGWLDIVALKYCCDINGFSSLNLTKLDVLSGLPEIKLGVSYNQMDGEKLQSFPGDLDTLEQVQVNYEVLPGWDSDISSVRSYSELPQAARRYVERIEELAGVPVHYIGVGPGRDALIYK</sequence>
<comment type="function">
    <text evidence="1">Plays an important role in the de novo pathway and in the salvage pathway of purine nucleotide biosynthesis. Catalyzes the first committed step in the biosynthesis of AMP from IMP (By similarity).</text>
</comment>
<comment type="catalytic activity">
    <reaction evidence="2">
        <text>IMP + L-aspartate + GTP = N(6)-(1,2-dicarboxyethyl)-AMP + GDP + phosphate + 2 H(+)</text>
        <dbReference type="Rhea" id="RHEA:15753"/>
        <dbReference type="ChEBI" id="CHEBI:15378"/>
        <dbReference type="ChEBI" id="CHEBI:29991"/>
        <dbReference type="ChEBI" id="CHEBI:37565"/>
        <dbReference type="ChEBI" id="CHEBI:43474"/>
        <dbReference type="ChEBI" id="CHEBI:57567"/>
        <dbReference type="ChEBI" id="CHEBI:58053"/>
        <dbReference type="ChEBI" id="CHEBI:58189"/>
        <dbReference type="EC" id="6.3.4.4"/>
    </reaction>
</comment>
<comment type="cofactor">
    <cofactor evidence="2">
        <name>Mg(2+)</name>
        <dbReference type="ChEBI" id="CHEBI:18420"/>
    </cofactor>
    <text evidence="2">Binds 1 Mg(2+) ion per subunit.</text>
</comment>
<comment type="pathway">
    <text evidence="2">Purine metabolism; AMP biosynthesis via de novo pathway; AMP from IMP: step 1/2.</text>
</comment>
<comment type="subunit">
    <text evidence="2 4">Homodimer.</text>
</comment>
<comment type="subcellular location">
    <subcellularLocation>
        <location>Plastid</location>
        <location>Chloroplast</location>
    </subcellularLocation>
</comment>
<comment type="miscellaneous">
    <text evidence="2">This protein may be expected to contain an N-terminal transit peptide but none has been predicted.</text>
</comment>
<comment type="similarity">
    <text evidence="2">Belongs to the adenylosuccinate synthetase family.</text>
</comment>
<feature type="chain" id="PRO_0000029872" description="Adenylosuccinate synthetase, chloroplastic">
    <location>
        <begin position="1" status="less than"/>
        <end position="476"/>
    </location>
</feature>
<feature type="region of interest" description="Disordered" evidence="3">
    <location>
        <begin position="1"/>
        <end position="34"/>
    </location>
</feature>
<feature type="compositionally biased region" description="Low complexity" evidence="3">
    <location>
        <begin position="1"/>
        <end position="20"/>
    </location>
</feature>
<feature type="active site" description="Proton acceptor" evidence="2">
    <location>
        <position position="64"/>
    </location>
</feature>
<feature type="active site" description="Proton donor" evidence="2">
    <location>
        <position position="92"/>
    </location>
</feature>
<feature type="binding site">
    <location>
        <begin position="63"/>
        <end position="69"/>
    </location>
    <ligand>
        <name>GTP</name>
        <dbReference type="ChEBI" id="CHEBI:37565"/>
    </ligand>
</feature>
<feature type="binding site" description="in other chain" evidence="2">
    <location>
        <begin position="64"/>
        <end position="67"/>
    </location>
    <ligand>
        <name>IMP</name>
        <dbReference type="ChEBI" id="CHEBI:58053"/>
        <note>ligand shared between dimeric partners</note>
    </ligand>
</feature>
<feature type="binding site" evidence="2">
    <location>
        <position position="64"/>
    </location>
    <ligand>
        <name>Mg(2+)</name>
        <dbReference type="ChEBI" id="CHEBI:18420"/>
    </ligand>
</feature>
<feature type="binding site" description="in other chain" evidence="2">
    <location>
        <begin position="89"/>
        <end position="92"/>
    </location>
    <ligand>
        <name>IMP</name>
        <dbReference type="ChEBI" id="CHEBI:58053"/>
        <note>ligand shared between dimeric partners</note>
    </ligand>
</feature>
<feature type="binding site">
    <location>
        <begin position="91"/>
        <end position="93"/>
    </location>
    <ligand>
        <name>GTP</name>
        <dbReference type="ChEBI" id="CHEBI:37565"/>
    </ligand>
</feature>
<feature type="binding site" evidence="2">
    <location>
        <position position="91"/>
    </location>
    <ligand>
        <name>Mg(2+)</name>
        <dbReference type="ChEBI" id="CHEBI:18420"/>
    </ligand>
</feature>
<feature type="binding site" description="in other chain" evidence="2">
    <location>
        <position position="181"/>
    </location>
    <ligand>
        <name>IMP</name>
        <dbReference type="ChEBI" id="CHEBI:58053"/>
        <note>ligand shared between dimeric partners</note>
    </ligand>
</feature>
<feature type="binding site" evidence="2">
    <location>
        <position position="195"/>
    </location>
    <ligand>
        <name>IMP</name>
        <dbReference type="ChEBI" id="CHEBI:58053"/>
        <note>ligand shared between dimeric partners</note>
    </ligand>
</feature>
<feature type="binding site" description="in other chain" evidence="2">
    <location>
        <position position="275"/>
    </location>
    <ligand>
        <name>IMP</name>
        <dbReference type="ChEBI" id="CHEBI:58053"/>
        <note>ligand shared between dimeric partners</note>
    </ligand>
</feature>
<feature type="binding site" description="in other chain" evidence="2">
    <location>
        <position position="290"/>
    </location>
    <ligand>
        <name>IMP</name>
        <dbReference type="ChEBI" id="CHEBI:58053"/>
        <note>ligand shared between dimeric partners</note>
    </ligand>
</feature>
<feature type="binding site" evidence="2">
    <location>
        <begin position="350"/>
        <end position="356"/>
    </location>
    <ligand>
        <name>substrate</name>
    </ligand>
</feature>
<feature type="binding site" description="in other chain" evidence="2">
    <location>
        <position position="354"/>
    </location>
    <ligand>
        <name>IMP</name>
        <dbReference type="ChEBI" id="CHEBI:58053"/>
        <note>ligand shared between dimeric partners</note>
    </ligand>
</feature>
<feature type="binding site" evidence="2">
    <location>
        <position position="356"/>
    </location>
    <ligand>
        <name>GTP</name>
        <dbReference type="ChEBI" id="CHEBI:37565"/>
    </ligand>
</feature>
<feature type="binding site">
    <location>
        <begin position="382"/>
        <end position="384"/>
    </location>
    <ligand>
        <name>GTP</name>
        <dbReference type="ChEBI" id="CHEBI:37565"/>
    </ligand>
</feature>
<feature type="binding site">
    <location>
        <begin position="465"/>
        <end position="467"/>
    </location>
    <ligand>
        <name>GTP</name>
        <dbReference type="ChEBI" id="CHEBI:37565"/>
    </ligand>
</feature>
<feature type="non-terminal residue">
    <location>
        <position position="1"/>
    </location>
</feature>
<feature type="helix" evidence="5">
    <location>
        <begin position="47"/>
        <end position="49"/>
    </location>
</feature>
<feature type="strand" evidence="5">
    <location>
        <begin position="53"/>
        <end position="59"/>
    </location>
</feature>
<feature type="strand" evidence="5">
    <location>
        <begin position="61"/>
        <end position="63"/>
    </location>
</feature>
<feature type="helix" evidence="5">
    <location>
        <begin position="67"/>
        <end position="74"/>
    </location>
</feature>
<feature type="helix" evidence="5">
    <location>
        <begin position="75"/>
        <end position="77"/>
    </location>
</feature>
<feature type="strand" evidence="5">
    <location>
        <begin position="79"/>
        <end position="83"/>
    </location>
</feature>
<feature type="strand" evidence="5">
    <location>
        <begin position="92"/>
        <end position="95"/>
    </location>
</feature>
<feature type="strand" evidence="5">
    <location>
        <begin position="101"/>
        <end position="107"/>
    </location>
</feature>
<feature type="helix" evidence="5">
    <location>
        <begin position="109"/>
        <end position="112"/>
    </location>
</feature>
<feature type="strand" evidence="5">
    <location>
        <begin position="117"/>
        <end position="120"/>
    </location>
</feature>
<feature type="helix" evidence="5">
    <location>
        <begin position="128"/>
        <end position="139"/>
    </location>
</feature>
<feature type="turn" evidence="5">
    <location>
        <begin position="140"/>
        <end position="142"/>
    </location>
</feature>
<feature type="turn" evidence="5">
    <location>
        <begin position="146"/>
        <end position="148"/>
    </location>
</feature>
<feature type="strand" evidence="5">
    <location>
        <begin position="149"/>
        <end position="152"/>
    </location>
</feature>
<feature type="strand" evidence="5">
    <location>
        <begin position="155"/>
        <end position="157"/>
    </location>
</feature>
<feature type="helix" evidence="5">
    <location>
        <begin position="160"/>
        <end position="172"/>
    </location>
</feature>
<feature type="helix" evidence="5">
    <location>
        <begin position="185"/>
        <end position="193"/>
    </location>
</feature>
<feature type="helix" evidence="5">
    <location>
        <begin position="200"/>
        <end position="204"/>
    </location>
</feature>
<feature type="helix" evidence="5">
    <location>
        <begin position="206"/>
        <end position="223"/>
    </location>
</feature>
<feature type="helix" evidence="5">
    <location>
        <begin position="231"/>
        <end position="248"/>
    </location>
</feature>
<feature type="turn" evidence="5">
    <location>
        <begin position="249"/>
        <end position="251"/>
    </location>
</feature>
<feature type="helix" evidence="5">
    <location>
        <begin position="255"/>
        <end position="264"/>
    </location>
</feature>
<feature type="strand" evidence="5">
    <location>
        <begin position="269"/>
        <end position="276"/>
    </location>
</feature>
<feature type="helix" evidence="5">
    <location>
        <begin position="277"/>
        <end position="279"/>
    </location>
</feature>
<feature type="turn" evidence="5">
    <location>
        <begin position="281"/>
        <end position="283"/>
    </location>
</feature>
<feature type="helix" evidence="5">
    <location>
        <begin position="297"/>
        <end position="303"/>
    </location>
</feature>
<feature type="helix" evidence="5">
    <location>
        <begin position="307"/>
        <end position="309"/>
    </location>
</feature>
<feature type="strand" evidence="5">
    <location>
        <begin position="313"/>
        <end position="323"/>
    </location>
</feature>
<feature type="strand" evidence="5">
    <location>
        <begin position="325"/>
        <end position="327"/>
    </location>
</feature>
<feature type="helix" evidence="5">
    <location>
        <begin position="336"/>
        <end position="345"/>
    </location>
</feature>
<feature type="turn" evidence="5">
    <location>
        <begin position="350"/>
        <end position="352"/>
    </location>
</feature>
<feature type="strand" evidence="5">
    <location>
        <begin position="357"/>
        <end position="362"/>
    </location>
</feature>
<feature type="helix" evidence="5">
    <location>
        <begin position="363"/>
        <end position="373"/>
    </location>
</feature>
<feature type="strand" evidence="5">
    <location>
        <begin position="376"/>
        <end position="381"/>
    </location>
</feature>
<feature type="helix" evidence="5">
    <location>
        <begin position="383"/>
        <end position="386"/>
    </location>
</feature>
<feature type="strand" evidence="5">
    <location>
        <begin position="390"/>
        <end position="392"/>
    </location>
</feature>
<feature type="strand" evidence="5">
    <location>
        <begin position="397"/>
        <end position="399"/>
    </location>
</feature>
<feature type="strand" evidence="5">
    <location>
        <begin position="401"/>
        <end position="403"/>
    </location>
</feature>
<feature type="helix" evidence="5">
    <location>
        <begin position="413"/>
        <end position="416"/>
    </location>
</feature>
<feature type="strand" evidence="5">
    <location>
        <begin position="420"/>
        <end position="422"/>
    </location>
</feature>
<feature type="helix" evidence="5">
    <location>
        <begin position="444"/>
        <end position="457"/>
    </location>
</feature>
<feature type="strand" evidence="5">
    <location>
        <begin position="463"/>
        <end position="465"/>
    </location>
</feature>
<feature type="strand" evidence="5">
    <location>
        <begin position="467"/>
        <end position="471"/>
    </location>
</feature>
<feature type="strand" evidence="5">
    <location>
        <begin position="473"/>
        <end position="475"/>
    </location>
</feature>
<dbReference type="EC" id="6.3.4.4" evidence="2"/>
<dbReference type="EMBL" id="U49387">
    <property type="protein sequence ID" value="AAB16829.1"/>
    <property type="molecule type" value="mRNA"/>
</dbReference>
<dbReference type="PIR" id="T06792">
    <property type="entry name" value="T06792"/>
</dbReference>
<dbReference type="PDB" id="1DJ3">
    <property type="method" value="X-ray"/>
    <property type="resolution" value="3.00 A"/>
    <property type="chains" value="A/B=35-476"/>
</dbReference>
<dbReference type="PDBsum" id="1DJ3"/>
<dbReference type="SMR" id="O24396"/>
<dbReference type="STRING" id="4565.O24396"/>
<dbReference type="PaxDb" id="4565-Traes_4DL_CDDD5E13E.1"/>
<dbReference type="eggNOG" id="KOG1355">
    <property type="taxonomic scope" value="Eukaryota"/>
</dbReference>
<dbReference type="BRENDA" id="6.3.4.4">
    <property type="organism ID" value="6500"/>
</dbReference>
<dbReference type="UniPathway" id="UPA00075">
    <property type="reaction ID" value="UER00335"/>
</dbReference>
<dbReference type="EvolutionaryTrace" id="O24396"/>
<dbReference type="Proteomes" id="UP000019116">
    <property type="component" value="Unplaced"/>
</dbReference>
<dbReference type="ExpressionAtlas" id="O24396">
    <property type="expression patterns" value="baseline"/>
</dbReference>
<dbReference type="GO" id="GO:0009507">
    <property type="term" value="C:chloroplast"/>
    <property type="evidence" value="ECO:0007669"/>
    <property type="project" value="UniProtKB-SubCell"/>
</dbReference>
<dbReference type="GO" id="GO:0005737">
    <property type="term" value="C:cytoplasm"/>
    <property type="evidence" value="ECO:0000318"/>
    <property type="project" value="GO_Central"/>
</dbReference>
<dbReference type="GO" id="GO:0004019">
    <property type="term" value="F:adenylosuccinate synthase activity"/>
    <property type="evidence" value="ECO:0000318"/>
    <property type="project" value="GO_Central"/>
</dbReference>
<dbReference type="GO" id="GO:0005525">
    <property type="term" value="F:GTP binding"/>
    <property type="evidence" value="ECO:0007669"/>
    <property type="project" value="UniProtKB-KW"/>
</dbReference>
<dbReference type="GO" id="GO:0046872">
    <property type="term" value="F:metal ion binding"/>
    <property type="evidence" value="ECO:0007669"/>
    <property type="project" value="UniProtKB-KW"/>
</dbReference>
<dbReference type="GO" id="GO:0044208">
    <property type="term" value="P:'de novo' AMP biosynthetic process"/>
    <property type="evidence" value="ECO:0000318"/>
    <property type="project" value="GO_Central"/>
</dbReference>
<dbReference type="GO" id="GO:0046040">
    <property type="term" value="P:IMP metabolic process"/>
    <property type="evidence" value="ECO:0000318"/>
    <property type="project" value="GO_Central"/>
</dbReference>
<dbReference type="CDD" id="cd03108">
    <property type="entry name" value="AdSS"/>
    <property type="match status" value="1"/>
</dbReference>
<dbReference type="FunFam" id="3.90.170.10:FF:000001">
    <property type="entry name" value="Adenylosuccinate synthetase"/>
    <property type="match status" value="1"/>
</dbReference>
<dbReference type="FunFam" id="1.10.300.10:FF:000002">
    <property type="entry name" value="Adenylosuccinate synthetase, chloroplastic"/>
    <property type="match status" value="1"/>
</dbReference>
<dbReference type="Gene3D" id="3.40.440.10">
    <property type="entry name" value="Adenylosuccinate Synthetase, subunit A, domain 1"/>
    <property type="match status" value="1"/>
</dbReference>
<dbReference type="Gene3D" id="1.10.300.10">
    <property type="entry name" value="Adenylosuccinate Synthetase, subunit A, domain 2"/>
    <property type="match status" value="1"/>
</dbReference>
<dbReference type="Gene3D" id="3.90.170.10">
    <property type="entry name" value="Adenylosuccinate Synthetase, subunit A, domain 3"/>
    <property type="match status" value="1"/>
</dbReference>
<dbReference type="HAMAP" id="MF_00011">
    <property type="entry name" value="Adenylosucc_synth"/>
    <property type="match status" value="1"/>
</dbReference>
<dbReference type="InterPro" id="IPR018220">
    <property type="entry name" value="Adenylosuccin_syn_GTP-bd"/>
</dbReference>
<dbReference type="InterPro" id="IPR033128">
    <property type="entry name" value="Adenylosuccin_syn_Lys_AS"/>
</dbReference>
<dbReference type="InterPro" id="IPR042109">
    <property type="entry name" value="Adenylosuccinate_synth_dom1"/>
</dbReference>
<dbReference type="InterPro" id="IPR042110">
    <property type="entry name" value="Adenylosuccinate_synth_dom2"/>
</dbReference>
<dbReference type="InterPro" id="IPR042111">
    <property type="entry name" value="Adenylosuccinate_synth_dom3"/>
</dbReference>
<dbReference type="InterPro" id="IPR001114">
    <property type="entry name" value="Adenylosuccinate_synthetase"/>
</dbReference>
<dbReference type="InterPro" id="IPR027417">
    <property type="entry name" value="P-loop_NTPase"/>
</dbReference>
<dbReference type="NCBIfam" id="NF002223">
    <property type="entry name" value="PRK01117.1"/>
    <property type="match status" value="1"/>
</dbReference>
<dbReference type="NCBIfam" id="TIGR00184">
    <property type="entry name" value="purA"/>
    <property type="match status" value="1"/>
</dbReference>
<dbReference type="PANTHER" id="PTHR11846">
    <property type="entry name" value="ADENYLOSUCCINATE SYNTHETASE"/>
    <property type="match status" value="1"/>
</dbReference>
<dbReference type="PANTHER" id="PTHR11846:SF19">
    <property type="entry name" value="ADENYLOSUCCINATE SYNTHETASE 1, CHLOROPLASTIC"/>
    <property type="match status" value="1"/>
</dbReference>
<dbReference type="Pfam" id="PF00709">
    <property type="entry name" value="Adenylsucc_synt"/>
    <property type="match status" value="1"/>
</dbReference>
<dbReference type="SMART" id="SM00788">
    <property type="entry name" value="Adenylsucc_synt"/>
    <property type="match status" value="1"/>
</dbReference>
<dbReference type="SUPFAM" id="SSF52540">
    <property type="entry name" value="P-loop containing nucleoside triphosphate hydrolases"/>
    <property type="match status" value="1"/>
</dbReference>
<dbReference type="PROSITE" id="PS01266">
    <property type="entry name" value="ADENYLOSUCCIN_SYN_1"/>
    <property type="match status" value="1"/>
</dbReference>
<dbReference type="PROSITE" id="PS00513">
    <property type="entry name" value="ADENYLOSUCCIN_SYN_2"/>
    <property type="match status" value="1"/>
</dbReference>
<accession>O24396</accession>
<proteinExistence type="evidence at protein level"/>
<keyword id="KW-0002">3D-structure</keyword>
<keyword id="KW-0150">Chloroplast</keyword>
<keyword id="KW-0342">GTP-binding</keyword>
<keyword id="KW-0436">Ligase</keyword>
<keyword id="KW-0460">Magnesium</keyword>
<keyword id="KW-0479">Metal-binding</keyword>
<keyword id="KW-0547">Nucleotide-binding</keyword>
<keyword id="KW-0934">Plastid</keyword>
<keyword id="KW-0658">Purine biosynthesis</keyword>
<keyword id="KW-1185">Reference proteome</keyword>
<reference key="1">
    <citation type="journal article" date="1996" name="Proc. Natl. Acad. Sci. U.S.A.">
        <title>The mode of action and the structure of a herbicide in complex with its target: binding of activated hydantocidin to the feedback regulation site of adenylosuccinate synthetase.</title>
        <authorList>
            <person name="Fonne-Pfister R."/>
            <person name="Chemla P."/>
            <person name="Ward E."/>
            <person name="Girardet M."/>
            <person name="Kreuz K.E."/>
            <person name="Honzatko R.B."/>
            <person name="Fromm H.J."/>
            <person name="Schaer H.-P."/>
            <person name="Gruetter M.G."/>
            <person name="Cowan-Jacob S.W."/>
        </authorList>
    </citation>
    <scope>NUCLEOTIDE SEQUENCE [MRNA]</scope>
    <source>
        <strain>cv. Kanzler</strain>
    </source>
</reference>
<reference key="2">
    <citation type="journal article" date="2000" name="J. Mol. Biol.">
        <title>Structures of adenylosuccinate synthetase from Triticum aestivum and Arabidopsis thaliana.</title>
        <authorList>
            <person name="Prade L."/>
            <person name="Cowan-Jacob S.W."/>
            <person name="Chemla P."/>
            <person name="Potter S."/>
            <person name="Ward E."/>
            <person name="Fonne-Pfister R."/>
        </authorList>
    </citation>
    <scope>X-RAY CRYSTALLOGRAPHY (3.0 ANGSTROMS) OF 35-476 IN COMPLEX WITH GDP</scope>
</reference>
<protein>
    <recommendedName>
        <fullName evidence="2">Adenylosuccinate synthetase, chloroplastic</fullName>
        <shortName evidence="2">AMPSase</shortName>
        <shortName evidence="2">AdSS</shortName>
        <ecNumber evidence="2">6.3.4.4</ecNumber>
    </recommendedName>
    <alternativeName>
        <fullName evidence="2">IMP--aspartate ligase</fullName>
    </alternativeName>
</protein>
<name>PURA_WHEAT</name>